<accession>A9KTE0</accession>
<organism>
    <name type="scientific">Lachnoclostridium phytofermentans (strain ATCC 700394 / DSM 18823 / ISDg)</name>
    <name type="common">Clostridium phytofermentans</name>
    <dbReference type="NCBI Taxonomy" id="357809"/>
    <lineage>
        <taxon>Bacteria</taxon>
        <taxon>Bacillati</taxon>
        <taxon>Bacillota</taxon>
        <taxon>Clostridia</taxon>
        <taxon>Lachnospirales</taxon>
        <taxon>Lachnospiraceae</taxon>
    </lineage>
</organism>
<dbReference type="EMBL" id="CP000885">
    <property type="protein sequence ID" value="ABX43770.1"/>
    <property type="molecule type" value="Genomic_DNA"/>
</dbReference>
<dbReference type="RefSeq" id="WP_012201419.1">
    <property type="nucleotide sequence ID" value="NC_010001.1"/>
</dbReference>
<dbReference type="SMR" id="A9KTE0"/>
<dbReference type="STRING" id="357809.Cphy_3417"/>
<dbReference type="KEGG" id="cpy:Cphy_3417"/>
<dbReference type="eggNOG" id="COG1281">
    <property type="taxonomic scope" value="Bacteria"/>
</dbReference>
<dbReference type="HOGENOM" id="CLU_054493_1_0_9"/>
<dbReference type="OrthoDB" id="9776534at2"/>
<dbReference type="Proteomes" id="UP000000370">
    <property type="component" value="Chromosome"/>
</dbReference>
<dbReference type="GO" id="GO:0005737">
    <property type="term" value="C:cytoplasm"/>
    <property type="evidence" value="ECO:0007669"/>
    <property type="project" value="UniProtKB-SubCell"/>
</dbReference>
<dbReference type="GO" id="GO:0044183">
    <property type="term" value="F:protein folding chaperone"/>
    <property type="evidence" value="ECO:0007669"/>
    <property type="project" value="TreeGrafter"/>
</dbReference>
<dbReference type="GO" id="GO:0051082">
    <property type="term" value="F:unfolded protein binding"/>
    <property type="evidence" value="ECO:0007669"/>
    <property type="project" value="UniProtKB-UniRule"/>
</dbReference>
<dbReference type="GO" id="GO:0042026">
    <property type="term" value="P:protein refolding"/>
    <property type="evidence" value="ECO:0007669"/>
    <property type="project" value="TreeGrafter"/>
</dbReference>
<dbReference type="CDD" id="cd00498">
    <property type="entry name" value="Hsp33"/>
    <property type="match status" value="1"/>
</dbReference>
<dbReference type="Gene3D" id="3.55.30.10">
    <property type="entry name" value="Hsp33 domain"/>
    <property type="match status" value="1"/>
</dbReference>
<dbReference type="Gene3D" id="3.90.1280.10">
    <property type="entry name" value="HSP33 redox switch-like"/>
    <property type="match status" value="1"/>
</dbReference>
<dbReference type="HAMAP" id="MF_00117">
    <property type="entry name" value="HslO"/>
    <property type="match status" value="1"/>
</dbReference>
<dbReference type="InterPro" id="IPR000397">
    <property type="entry name" value="Heat_shock_Hsp33"/>
</dbReference>
<dbReference type="InterPro" id="IPR016154">
    <property type="entry name" value="Heat_shock_Hsp33_C"/>
</dbReference>
<dbReference type="InterPro" id="IPR016153">
    <property type="entry name" value="Heat_shock_Hsp33_N"/>
</dbReference>
<dbReference type="NCBIfam" id="NF001033">
    <property type="entry name" value="PRK00114.1"/>
    <property type="match status" value="1"/>
</dbReference>
<dbReference type="PANTHER" id="PTHR30111">
    <property type="entry name" value="33 KDA CHAPERONIN"/>
    <property type="match status" value="1"/>
</dbReference>
<dbReference type="PANTHER" id="PTHR30111:SF1">
    <property type="entry name" value="33 KDA CHAPERONIN"/>
    <property type="match status" value="1"/>
</dbReference>
<dbReference type="Pfam" id="PF01430">
    <property type="entry name" value="HSP33"/>
    <property type="match status" value="1"/>
</dbReference>
<dbReference type="PIRSF" id="PIRSF005261">
    <property type="entry name" value="Heat_shock_Hsp33"/>
    <property type="match status" value="1"/>
</dbReference>
<dbReference type="SUPFAM" id="SSF64397">
    <property type="entry name" value="Hsp33 domain"/>
    <property type="match status" value="1"/>
</dbReference>
<dbReference type="SUPFAM" id="SSF118352">
    <property type="entry name" value="HSP33 redox switch-like"/>
    <property type="match status" value="1"/>
</dbReference>
<reference key="1">
    <citation type="submission" date="2007-11" db="EMBL/GenBank/DDBJ databases">
        <title>Complete genome sequence of Clostridium phytofermentans ISDg.</title>
        <authorList>
            <person name="Leschine S.B."/>
            <person name="Warnick T.A."/>
            <person name="Blanchard J.L."/>
            <person name="Schnell D.J."/>
            <person name="Petit E.L."/>
            <person name="LaTouf W.G."/>
            <person name="Copeland A."/>
            <person name="Lucas S."/>
            <person name="Lapidus A."/>
            <person name="Barry K."/>
            <person name="Glavina del Rio T."/>
            <person name="Dalin E."/>
            <person name="Tice H."/>
            <person name="Pitluck S."/>
            <person name="Kiss H."/>
            <person name="Brettin T."/>
            <person name="Bruce D."/>
            <person name="Detter J.C."/>
            <person name="Han C."/>
            <person name="Kuske C."/>
            <person name="Schmutz J."/>
            <person name="Larimer F."/>
            <person name="Land M."/>
            <person name="Hauser L."/>
            <person name="Kyrpides N."/>
            <person name="Kim E.A."/>
            <person name="Richardson P."/>
        </authorList>
    </citation>
    <scope>NUCLEOTIDE SEQUENCE [LARGE SCALE GENOMIC DNA]</scope>
    <source>
        <strain>ATCC 700394 / DSM 18823 / ISDg</strain>
    </source>
</reference>
<name>HSLO_LACP7</name>
<feature type="chain" id="PRO_1000076081" description="33 kDa chaperonin">
    <location>
        <begin position="1"/>
        <end position="292"/>
    </location>
</feature>
<feature type="disulfide bond" description="Redox-active" evidence="1">
    <location>
        <begin position="237"/>
        <end position="239"/>
    </location>
</feature>
<feature type="disulfide bond" description="Redox-active" evidence="1">
    <location>
        <begin position="270"/>
        <end position="273"/>
    </location>
</feature>
<protein>
    <recommendedName>
        <fullName evidence="1">33 kDa chaperonin</fullName>
    </recommendedName>
    <alternativeName>
        <fullName evidence="1">Heat shock protein 33 homolog</fullName>
        <shortName evidence="1">HSP33</shortName>
    </alternativeName>
</protein>
<keyword id="KW-0143">Chaperone</keyword>
<keyword id="KW-0963">Cytoplasm</keyword>
<keyword id="KW-1015">Disulfide bond</keyword>
<keyword id="KW-0676">Redox-active center</keyword>
<keyword id="KW-1185">Reference proteome</keyword>
<keyword id="KW-0862">Zinc</keyword>
<gene>
    <name evidence="1" type="primary">hslO</name>
    <name type="ordered locus">Cphy_3417</name>
</gene>
<evidence type="ECO:0000255" key="1">
    <source>
        <dbReference type="HAMAP-Rule" id="MF_00117"/>
    </source>
</evidence>
<comment type="function">
    <text evidence="1">Redox regulated molecular chaperone. Protects both thermally unfolding and oxidatively damaged proteins from irreversible aggregation. Plays an important role in the bacterial defense system toward oxidative stress.</text>
</comment>
<comment type="subcellular location">
    <subcellularLocation>
        <location evidence="1">Cytoplasm</location>
    </subcellularLocation>
</comment>
<comment type="PTM">
    <text evidence="1">Under oxidizing conditions two disulfide bonds are formed involving the reactive cysteines. Under reducing conditions zinc is bound to the reactive cysteines and the protein is inactive.</text>
</comment>
<comment type="similarity">
    <text evidence="1">Belongs to the HSP33 family.</text>
</comment>
<proteinExistence type="inferred from homology"/>
<sequence length="292" mass="31585">MNDYIIRATAANSQIRAFACISTEIVETARQAHNTSPVVTAALGRLLTGGAMMGSMMKGEKDLLTLKIACSGPIGGLTVTADAGANVKGYANQNVVNLPPSPKGKLDVGKALDIGVLSVIKDMGLKEPYVGQTDLVTGEIAEDLTYYFATSEQVPSSVALGVLMNRDNTVRCAGGFIIQLLPFAEEEVIEKLEKKIGEITSVTSMLDKGMTPEEILQELLGEFGLTILDKIPTKFTCNCTKERVEKAIVSIGKKDLQEMIDDEKPIEVNCHFCNTNYEFSVEELKDIITRSN</sequence>